<organism>
    <name type="scientific">Nautilia profundicola (strain ATCC BAA-1463 / DSM 18972 / AmH)</name>
    <dbReference type="NCBI Taxonomy" id="598659"/>
    <lineage>
        <taxon>Bacteria</taxon>
        <taxon>Pseudomonadati</taxon>
        <taxon>Campylobacterota</taxon>
        <taxon>Epsilonproteobacteria</taxon>
        <taxon>Nautiliales</taxon>
        <taxon>Nautiliaceae</taxon>
        <taxon>Nautilia</taxon>
    </lineage>
</organism>
<accession>B9L9A2</accession>
<keyword id="KW-0028">Amino-acid biosynthesis</keyword>
<keyword id="KW-0963">Cytoplasm</keyword>
<keyword id="KW-0521">NADP</keyword>
<keyword id="KW-0560">Oxidoreductase</keyword>
<keyword id="KW-0641">Proline biosynthesis</keyword>
<sequence>MKEVLRKVKDASRVTATLNGEIKRKILKEMAEALEQNSSLIINENKKDLKYANENNLSAALIDRLYLDEKRIGSMADALRDIATLKDPVGRVIDGWMLDNGLRIEKVKIPIGVIGIIYESRPNVTSDAAGLCFMSGNACILKGGKEAMYSNIAIINVLRDVLERNSLPKDAVSLLPDYSREGVYKLIQEDKYVDLIIPRGGEKLIKFVSENSKVPVVKHDKGLCHIYIHKDANIDEAVKISVNAKVQRPGVCNAVETLLVDESVKNEILPKLKAEMEKEGVELRGCEKTLEVIDINKATEEDWNTEYLDKILSIKVVRDLNEAIEHIQTYGSGHSDSIITENYSASEEFLNRVDSACVYVNASTRFTDGGEFGFGAEVGISTNKLHARGPMGIDDLTTYKYKIYGNGQIRE</sequence>
<dbReference type="EC" id="1.2.1.41" evidence="1"/>
<dbReference type="EMBL" id="CP001279">
    <property type="protein sequence ID" value="ACM92254.1"/>
    <property type="molecule type" value="Genomic_DNA"/>
</dbReference>
<dbReference type="RefSeq" id="WP_012663626.1">
    <property type="nucleotide sequence ID" value="NC_012115.1"/>
</dbReference>
<dbReference type="SMR" id="B9L9A2"/>
<dbReference type="STRING" id="598659.NAMH_0807"/>
<dbReference type="KEGG" id="nam:NAMH_0807"/>
<dbReference type="eggNOG" id="COG0014">
    <property type="taxonomic scope" value="Bacteria"/>
</dbReference>
<dbReference type="HOGENOM" id="CLU_030231_0_0_7"/>
<dbReference type="OrthoDB" id="9809970at2"/>
<dbReference type="UniPathway" id="UPA00098">
    <property type="reaction ID" value="UER00360"/>
</dbReference>
<dbReference type="Proteomes" id="UP000000448">
    <property type="component" value="Chromosome"/>
</dbReference>
<dbReference type="GO" id="GO:0005737">
    <property type="term" value="C:cytoplasm"/>
    <property type="evidence" value="ECO:0007669"/>
    <property type="project" value="UniProtKB-SubCell"/>
</dbReference>
<dbReference type="GO" id="GO:0004350">
    <property type="term" value="F:glutamate-5-semialdehyde dehydrogenase activity"/>
    <property type="evidence" value="ECO:0007669"/>
    <property type="project" value="UniProtKB-UniRule"/>
</dbReference>
<dbReference type="GO" id="GO:0050661">
    <property type="term" value="F:NADP binding"/>
    <property type="evidence" value="ECO:0007669"/>
    <property type="project" value="InterPro"/>
</dbReference>
<dbReference type="GO" id="GO:0055129">
    <property type="term" value="P:L-proline biosynthetic process"/>
    <property type="evidence" value="ECO:0007669"/>
    <property type="project" value="UniProtKB-UniRule"/>
</dbReference>
<dbReference type="CDD" id="cd07079">
    <property type="entry name" value="ALDH_F18-19_ProA-GPR"/>
    <property type="match status" value="1"/>
</dbReference>
<dbReference type="FunFam" id="3.40.309.10:FF:000006">
    <property type="entry name" value="Gamma-glutamyl phosphate reductase"/>
    <property type="match status" value="1"/>
</dbReference>
<dbReference type="Gene3D" id="3.40.605.10">
    <property type="entry name" value="Aldehyde Dehydrogenase, Chain A, domain 1"/>
    <property type="match status" value="1"/>
</dbReference>
<dbReference type="Gene3D" id="3.40.309.10">
    <property type="entry name" value="Aldehyde Dehydrogenase, Chain A, domain 2"/>
    <property type="match status" value="1"/>
</dbReference>
<dbReference type="HAMAP" id="MF_00412">
    <property type="entry name" value="ProA"/>
    <property type="match status" value="1"/>
</dbReference>
<dbReference type="InterPro" id="IPR016161">
    <property type="entry name" value="Ald_DH/histidinol_DH"/>
</dbReference>
<dbReference type="InterPro" id="IPR016163">
    <property type="entry name" value="Ald_DH_C"/>
</dbReference>
<dbReference type="InterPro" id="IPR016162">
    <property type="entry name" value="Ald_DH_N"/>
</dbReference>
<dbReference type="InterPro" id="IPR015590">
    <property type="entry name" value="Aldehyde_DH_dom"/>
</dbReference>
<dbReference type="InterPro" id="IPR020593">
    <property type="entry name" value="G-glutamylP_reductase_CS"/>
</dbReference>
<dbReference type="InterPro" id="IPR012134">
    <property type="entry name" value="Glu-5-SA_DH"/>
</dbReference>
<dbReference type="InterPro" id="IPR000965">
    <property type="entry name" value="GPR_dom"/>
</dbReference>
<dbReference type="NCBIfam" id="NF001221">
    <property type="entry name" value="PRK00197.1"/>
    <property type="match status" value="1"/>
</dbReference>
<dbReference type="NCBIfam" id="TIGR00407">
    <property type="entry name" value="proA"/>
    <property type="match status" value="1"/>
</dbReference>
<dbReference type="PANTHER" id="PTHR11063:SF8">
    <property type="entry name" value="DELTA-1-PYRROLINE-5-CARBOXYLATE SYNTHASE"/>
    <property type="match status" value="1"/>
</dbReference>
<dbReference type="PANTHER" id="PTHR11063">
    <property type="entry name" value="GLUTAMATE SEMIALDEHYDE DEHYDROGENASE"/>
    <property type="match status" value="1"/>
</dbReference>
<dbReference type="Pfam" id="PF00171">
    <property type="entry name" value="Aldedh"/>
    <property type="match status" value="1"/>
</dbReference>
<dbReference type="PIRSF" id="PIRSF000151">
    <property type="entry name" value="GPR"/>
    <property type="match status" value="1"/>
</dbReference>
<dbReference type="SUPFAM" id="SSF53720">
    <property type="entry name" value="ALDH-like"/>
    <property type="match status" value="1"/>
</dbReference>
<dbReference type="PROSITE" id="PS01223">
    <property type="entry name" value="PROA"/>
    <property type="match status" value="1"/>
</dbReference>
<reference key="1">
    <citation type="journal article" date="2009" name="PLoS Genet.">
        <title>Adaptations to submarine hydrothermal environments exemplified by the genome of Nautilia profundicola.</title>
        <authorList>
            <person name="Campbell B.J."/>
            <person name="Smith J.L."/>
            <person name="Hanson T.E."/>
            <person name="Klotz M.G."/>
            <person name="Stein L.Y."/>
            <person name="Lee C.K."/>
            <person name="Wu D."/>
            <person name="Robinson J.M."/>
            <person name="Khouri H.M."/>
            <person name="Eisen J.A."/>
            <person name="Cary S.C."/>
        </authorList>
    </citation>
    <scope>NUCLEOTIDE SEQUENCE [LARGE SCALE GENOMIC DNA]</scope>
    <source>
        <strain>ATCC BAA-1463 / DSM 18972 / AmH</strain>
    </source>
</reference>
<protein>
    <recommendedName>
        <fullName evidence="1">Gamma-glutamyl phosphate reductase</fullName>
        <shortName evidence="1">GPR</shortName>
        <ecNumber evidence="1">1.2.1.41</ecNumber>
    </recommendedName>
    <alternativeName>
        <fullName evidence="1">Glutamate-5-semialdehyde dehydrogenase</fullName>
    </alternativeName>
    <alternativeName>
        <fullName evidence="1">Glutamyl-gamma-semialdehyde dehydrogenase</fullName>
        <shortName evidence="1">GSA dehydrogenase</shortName>
    </alternativeName>
</protein>
<evidence type="ECO:0000255" key="1">
    <source>
        <dbReference type="HAMAP-Rule" id="MF_00412"/>
    </source>
</evidence>
<gene>
    <name evidence="1" type="primary">proA</name>
    <name type="ordered locus">NAMH_0807</name>
</gene>
<feature type="chain" id="PRO_1000193629" description="Gamma-glutamyl phosphate reductase">
    <location>
        <begin position="1"/>
        <end position="411"/>
    </location>
</feature>
<name>PROA_NAUPA</name>
<proteinExistence type="inferred from homology"/>
<comment type="function">
    <text evidence="1">Catalyzes the NADPH-dependent reduction of L-glutamate 5-phosphate into L-glutamate 5-semialdehyde and phosphate. The product spontaneously undergoes cyclization to form 1-pyrroline-5-carboxylate.</text>
</comment>
<comment type="catalytic activity">
    <reaction evidence="1">
        <text>L-glutamate 5-semialdehyde + phosphate + NADP(+) = L-glutamyl 5-phosphate + NADPH + H(+)</text>
        <dbReference type="Rhea" id="RHEA:19541"/>
        <dbReference type="ChEBI" id="CHEBI:15378"/>
        <dbReference type="ChEBI" id="CHEBI:43474"/>
        <dbReference type="ChEBI" id="CHEBI:57783"/>
        <dbReference type="ChEBI" id="CHEBI:58066"/>
        <dbReference type="ChEBI" id="CHEBI:58274"/>
        <dbReference type="ChEBI" id="CHEBI:58349"/>
        <dbReference type="EC" id="1.2.1.41"/>
    </reaction>
</comment>
<comment type="pathway">
    <text evidence="1">Amino-acid biosynthesis; L-proline biosynthesis; L-glutamate 5-semialdehyde from L-glutamate: step 2/2.</text>
</comment>
<comment type="subcellular location">
    <subcellularLocation>
        <location evidence="1">Cytoplasm</location>
    </subcellularLocation>
</comment>
<comment type="similarity">
    <text evidence="1">Belongs to the gamma-glutamyl phosphate reductase family.</text>
</comment>